<evidence type="ECO:0000255" key="1">
    <source>
        <dbReference type="HAMAP-Rule" id="MF_01161"/>
    </source>
</evidence>
<evidence type="ECO:0000255" key="2">
    <source>
        <dbReference type="PROSITE-ProRule" id="PRU01083"/>
    </source>
</evidence>
<evidence type="ECO:0000256" key="3">
    <source>
        <dbReference type="SAM" id="MobiDB-lite"/>
    </source>
</evidence>
<evidence type="ECO:0000305" key="4"/>
<name>TILS_DEIRA</name>
<gene>
    <name evidence="1" type="primary">tilS</name>
    <name type="ordered locus">DR_1207</name>
</gene>
<keyword id="KW-0067">ATP-binding</keyword>
<keyword id="KW-0963">Cytoplasm</keyword>
<keyword id="KW-0436">Ligase</keyword>
<keyword id="KW-0547">Nucleotide-binding</keyword>
<keyword id="KW-1185">Reference proteome</keyword>
<keyword id="KW-0819">tRNA processing</keyword>
<dbReference type="EC" id="6.3.4.19" evidence="1"/>
<dbReference type="EMBL" id="AE000513">
    <property type="protein sequence ID" value="AAF10777.1"/>
    <property type="status" value="ALT_INIT"/>
    <property type="molecule type" value="Genomic_DNA"/>
</dbReference>
<dbReference type="PIR" id="F75424">
    <property type="entry name" value="F75424"/>
</dbReference>
<dbReference type="RefSeq" id="NP_294931.1">
    <property type="nucleotide sequence ID" value="NC_001263.1"/>
</dbReference>
<dbReference type="SMR" id="Q9RV23"/>
<dbReference type="FunCoup" id="Q9RV23">
    <property type="interactions" value="121"/>
</dbReference>
<dbReference type="STRING" id="243230.DR_1207"/>
<dbReference type="PaxDb" id="243230-DR_1207"/>
<dbReference type="EnsemblBacteria" id="AAF10777">
    <property type="protein sequence ID" value="AAF10777"/>
    <property type="gene ID" value="DR_1207"/>
</dbReference>
<dbReference type="KEGG" id="dra:DR_1207"/>
<dbReference type="PATRIC" id="fig|243230.17.peg.1406"/>
<dbReference type="eggNOG" id="COG0037">
    <property type="taxonomic scope" value="Bacteria"/>
</dbReference>
<dbReference type="eggNOG" id="COG0590">
    <property type="taxonomic scope" value="Bacteria"/>
</dbReference>
<dbReference type="InParanoid" id="Q9RV23"/>
<dbReference type="OrthoDB" id="9807403at2"/>
<dbReference type="Proteomes" id="UP000002524">
    <property type="component" value="Chromosome 1"/>
</dbReference>
<dbReference type="GO" id="GO:0005737">
    <property type="term" value="C:cytoplasm"/>
    <property type="evidence" value="ECO:0007669"/>
    <property type="project" value="UniProtKB-SubCell"/>
</dbReference>
<dbReference type="GO" id="GO:0005524">
    <property type="term" value="F:ATP binding"/>
    <property type="evidence" value="ECO:0007669"/>
    <property type="project" value="UniProtKB-UniRule"/>
</dbReference>
<dbReference type="GO" id="GO:0032267">
    <property type="term" value="F:tRNA(Ile)-lysidine synthase activity"/>
    <property type="evidence" value="ECO:0007669"/>
    <property type="project" value="UniProtKB-EC"/>
</dbReference>
<dbReference type="GO" id="GO:0052717">
    <property type="term" value="F:tRNA-specific adenosine-34 deaminase activity"/>
    <property type="evidence" value="ECO:0007669"/>
    <property type="project" value="UniProtKB-UniRule"/>
</dbReference>
<dbReference type="GO" id="GO:0008270">
    <property type="term" value="F:zinc ion binding"/>
    <property type="evidence" value="ECO:0007669"/>
    <property type="project" value="UniProtKB-UniRule"/>
</dbReference>
<dbReference type="GO" id="GO:0002100">
    <property type="term" value="P:tRNA wobble adenosine to inosine editing"/>
    <property type="evidence" value="ECO:0007669"/>
    <property type="project" value="UniProtKB-UniRule"/>
</dbReference>
<dbReference type="CDD" id="cd01285">
    <property type="entry name" value="nucleoside_deaminase"/>
    <property type="match status" value="1"/>
</dbReference>
<dbReference type="CDD" id="cd01992">
    <property type="entry name" value="TilS_N"/>
    <property type="match status" value="1"/>
</dbReference>
<dbReference type="Gene3D" id="3.40.140.10">
    <property type="entry name" value="Cytidine Deaminase, domain 2"/>
    <property type="match status" value="1"/>
</dbReference>
<dbReference type="Gene3D" id="3.40.50.620">
    <property type="entry name" value="HUPs"/>
    <property type="match status" value="1"/>
</dbReference>
<dbReference type="HAMAP" id="MF_00972">
    <property type="entry name" value="tRNA_aden_deaminase"/>
    <property type="match status" value="1"/>
</dbReference>
<dbReference type="HAMAP" id="MF_01161">
    <property type="entry name" value="tRNA_Ile_lys_synt"/>
    <property type="match status" value="1"/>
</dbReference>
<dbReference type="InterPro" id="IPR002125">
    <property type="entry name" value="CMP_dCMP_dom"/>
</dbReference>
<dbReference type="InterPro" id="IPR016193">
    <property type="entry name" value="Cytidine_deaminase-like"/>
</dbReference>
<dbReference type="InterPro" id="IPR012796">
    <property type="entry name" value="Lysidine-tRNA-synth_C"/>
</dbReference>
<dbReference type="InterPro" id="IPR014729">
    <property type="entry name" value="Rossmann-like_a/b/a_fold"/>
</dbReference>
<dbReference type="InterPro" id="IPR011063">
    <property type="entry name" value="TilS/TtcA_N"/>
</dbReference>
<dbReference type="InterPro" id="IPR028883">
    <property type="entry name" value="tRNA_aden_deaminase"/>
</dbReference>
<dbReference type="InterPro" id="IPR012094">
    <property type="entry name" value="tRNA_Ile_lys_synt"/>
</dbReference>
<dbReference type="InterPro" id="IPR012795">
    <property type="entry name" value="tRNA_Ile_lys_synt_N"/>
</dbReference>
<dbReference type="NCBIfam" id="TIGR02433">
    <property type="entry name" value="lysidine_TilS_C"/>
    <property type="match status" value="1"/>
</dbReference>
<dbReference type="NCBIfam" id="TIGR02432">
    <property type="entry name" value="lysidine_TilS_N"/>
    <property type="match status" value="1"/>
</dbReference>
<dbReference type="PANTHER" id="PTHR43033">
    <property type="entry name" value="TRNA(ILE)-LYSIDINE SYNTHASE-RELATED"/>
    <property type="match status" value="1"/>
</dbReference>
<dbReference type="PANTHER" id="PTHR43033:SF1">
    <property type="entry name" value="TRNA(ILE)-LYSIDINE SYNTHASE-RELATED"/>
    <property type="match status" value="1"/>
</dbReference>
<dbReference type="Pfam" id="PF01171">
    <property type="entry name" value="ATP_bind_3"/>
    <property type="match status" value="1"/>
</dbReference>
<dbReference type="Pfam" id="PF14437">
    <property type="entry name" value="MafB19-deam"/>
    <property type="match status" value="1"/>
</dbReference>
<dbReference type="Pfam" id="PF11734">
    <property type="entry name" value="TilS_C"/>
    <property type="match status" value="1"/>
</dbReference>
<dbReference type="SMART" id="SM00977">
    <property type="entry name" value="TilS_C"/>
    <property type="match status" value="1"/>
</dbReference>
<dbReference type="SUPFAM" id="SSF52402">
    <property type="entry name" value="Adenine nucleotide alpha hydrolases-like"/>
    <property type="match status" value="1"/>
</dbReference>
<dbReference type="SUPFAM" id="SSF53927">
    <property type="entry name" value="Cytidine deaminase-like"/>
    <property type="match status" value="1"/>
</dbReference>
<dbReference type="SUPFAM" id="SSF56037">
    <property type="entry name" value="PheT/TilS domain"/>
    <property type="match status" value="1"/>
</dbReference>
<dbReference type="PROSITE" id="PS51747">
    <property type="entry name" value="CYT_DCMP_DEAMINASES_2"/>
    <property type="match status" value="1"/>
</dbReference>
<accession>Q9RV23</accession>
<proteinExistence type="inferred from homology"/>
<comment type="function">
    <text evidence="1">Ligates lysine onto the cytidine present at position 34 of the AUA codon-specific tRNA(Ile) that contains the anticodon CAU, in an ATP-dependent manner. Cytidine is converted to lysidine, thus changing the amino acid specificity of the tRNA from methionine to isoleucine.</text>
</comment>
<comment type="catalytic activity">
    <reaction evidence="1">
        <text>cytidine(34) in tRNA(Ile2) + L-lysine + ATP = lysidine(34) in tRNA(Ile2) + AMP + diphosphate + H(+)</text>
        <dbReference type="Rhea" id="RHEA:43744"/>
        <dbReference type="Rhea" id="RHEA-COMP:10625"/>
        <dbReference type="Rhea" id="RHEA-COMP:10670"/>
        <dbReference type="ChEBI" id="CHEBI:15378"/>
        <dbReference type="ChEBI" id="CHEBI:30616"/>
        <dbReference type="ChEBI" id="CHEBI:32551"/>
        <dbReference type="ChEBI" id="CHEBI:33019"/>
        <dbReference type="ChEBI" id="CHEBI:82748"/>
        <dbReference type="ChEBI" id="CHEBI:83665"/>
        <dbReference type="ChEBI" id="CHEBI:456215"/>
        <dbReference type="EC" id="6.3.4.19"/>
    </reaction>
</comment>
<comment type="subcellular location">
    <subcellularLocation>
        <location evidence="1">Cytoplasm</location>
    </subcellularLocation>
</comment>
<comment type="domain">
    <text>The N-terminal region contains the highly conserved SGGXDS motif, predicted to be a P-loop motif involved in ATP binding.</text>
</comment>
<comment type="similarity">
    <text evidence="1">Belongs to the tRNA(Ile)-lysidine synthase family.</text>
</comment>
<comment type="sequence caution" evidence="4">
    <conflict type="erroneous initiation">
        <sequence resource="EMBL-CDS" id="AAF10777"/>
    </conflict>
</comment>
<feature type="chain" id="PRO_0000181686" description="tRNA(Ile)-lysidine synthase">
    <location>
        <begin position="1"/>
        <end position="582"/>
    </location>
</feature>
<feature type="domain" description="CMP/dCMP-type deaminase" evidence="2">
    <location>
        <begin position="402"/>
        <end position="525"/>
    </location>
</feature>
<feature type="region of interest" description="Disordered" evidence="3">
    <location>
        <begin position="548"/>
        <end position="582"/>
    </location>
</feature>
<feature type="compositionally biased region" description="Low complexity" evidence="3">
    <location>
        <begin position="563"/>
        <end position="575"/>
    </location>
</feature>
<feature type="binding site" evidence="1">
    <location>
        <begin position="46"/>
        <end position="51"/>
    </location>
    <ligand>
        <name>ATP</name>
        <dbReference type="ChEBI" id="CHEBI:30616"/>
    </ligand>
</feature>
<sequence>MSLFHLLRRSVTVAVMSESAPNHTSARRLTQPLEPFVGRQVLVGVSGGADSVGLLRALLAVGALPAVAHLDHALRPESVDDAAWVSDLCARLGVPCEVTRIDVGAVAARRNWNLEAARRLRYDVLSRAAKHSGAEVILTAHTRRDQAETVLMELLRGEGRIRGIPPQRGRVRRPWLNVGRAEIETYLRGLGQDWREDASNADPRFTRAWLRREVMPVLLTRFPAAETALAQVAELGAEDDAALQALAARLTPHTPLDRQPPAVLRRWLAAELRSGGLDFTAEQLRDLAGALNAGQTRHLTLPTGRDVTVTGGHLYTAPCDWPEPDFPLPPDWTRRTRQAGDRIRLAGGTRKLSDVLTDAHLPRAERDRVPLLTDEHGAVQWVGVQPPLWAVGARESLGLPADPLHAAMGEALALAQQAAERQEVPVGAVVLNADGEIVGRGRNTSREDGDMTCHAELAALREAAAGLGTPYLSDCTLVVTLEPCPMCLGAALEARIGHIVYGAANPKAGALGGVSDLLADHWGWRPTVQGGVRAGEAARLLREVFGEVRRRSADTPQTPNAETPAPRSSRSTSASGKPTMLE</sequence>
<protein>
    <recommendedName>
        <fullName evidence="1">tRNA(Ile)-lysidine synthase</fullName>
        <ecNumber evidence="1">6.3.4.19</ecNumber>
    </recommendedName>
    <alternativeName>
        <fullName evidence="1">tRNA(Ile)-2-lysyl-cytidine synthase</fullName>
    </alternativeName>
    <alternativeName>
        <fullName evidence="1">tRNA(Ile)-lysidine synthetase</fullName>
    </alternativeName>
</protein>
<organism>
    <name type="scientific">Deinococcus radiodurans (strain ATCC 13939 / DSM 20539 / JCM 16871 / CCUG 27074 / LMG 4051 / NBRC 15346 / NCIMB 9279 / VKM B-1422 / R1)</name>
    <dbReference type="NCBI Taxonomy" id="243230"/>
    <lineage>
        <taxon>Bacteria</taxon>
        <taxon>Thermotogati</taxon>
        <taxon>Deinococcota</taxon>
        <taxon>Deinococci</taxon>
        <taxon>Deinococcales</taxon>
        <taxon>Deinococcaceae</taxon>
        <taxon>Deinococcus</taxon>
    </lineage>
</organism>
<reference key="1">
    <citation type="journal article" date="1999" name="Science">
        <title>Genome sequence of the radioresistant bacterium Deinococcus radiodurans R1.</title>
        <authorList>
            <person name="White O."/>
            <person name="Eisen J.A."/>
            <person name="Heidelberg J.F."/>
            <person name="Hickey E.K."/>
            <person name="Peterson J.D."/>
            <person name="Dodson R.J."/>
            <person name="Haft D.H."/>
            <person name="Gwinn M.L."/>
            <person name="Nelson W.C."/>
            <person name="Richardson D.L."/>
            <person name="Moffat K.S."/>
            <person name="Qin H."/>
            <person name="Jiang L."/>
            <person name="Pamphile W."/>
            <person name="Crosby M."/>
            <person name="Shen M."/>
            <person name="Vamathevan J.J."/>
            <person name="Lam P."/>
            <person name="McDonald L.A."/>
            <person name="Utterback T.R."/>
            <person name="Zalewski C."/>
            <person name="Makarova K.S."/>
            <person name="Aravind L."/>
            <person name="Daly M.J."/>
            <person name="Minton K.W."/>
            <person name="Fleischmann R.D."/>
            <person name="Ketchum K.A."/>
            <person name="Nelson K.E."/>
            <person name="Salzberg S.L."/>
            <person name="Smith H.O."/>
            <person name="Venter J.C."/>
            <person name="Fraser C.M."/>
        </authorList>
    </citation>
    <scope>NUCLEOTIDE SEQUENCE [LARGE SCALE GENOMIC DNA]</scope>
    <source>
        <strain>ATCC 13939 / DSM 20539 / JCM 16871 / CCUG 27074 / LMG 4051 / NBRC 15346 / NCIMB 9279 / VKM B-1422 / R1</strain>
    </source>
</reference>